<proteinExistence type="inferred from homology"/>
<name>RL7_SHEHH</name>
<dbReference type="EMBL" id="CP000931">
    <property type="protein sequence ID" value="ABZ78682.1"/>
    <property type="molecule type" value="Genomic_DNA"/>
</dbReference>
<dbReference type="RefSeq" id="WP_012279187.1">
    <property type="nucleotide sequence ID" value="NC_010334.1"/>
</dbReference>
<dbReference type="SMR" id="B0TM20"/>
<dbReference type="STRING" id="458817.Shal_4142"/>
<dbReference type="KEGG" id="shl:Shal_4142"/>
<dbReference type="eggNOG" id="COG0222">
    <property type="taxonomic scope" value="Bacteria"/>
</dbReference>
<dbReference type="HOGENOM" id="CLU_086499_3_2_6"/>
<dbReference type="OrthoDB" id="9811748at2"/>
<dbReference type="Proteomes" id="UP000001317">
    <property type="component" value="Chromosome"/>
</dbReference>
<dbReference type="GO" id="GO:0022625">
    <property type="term" value="C:cytosolic large ribosomal subunit"/>
    <property type="evidence" value="ECO:0007669"/>
    <property type="project" value="TreeGrafter"/>
</dbReference>
<dbReference type="GO" id="GO:0003729">
    <property type="term" value="F:mRNA binding"/>
    <property type="evidence" value="ECO:0007669"/>
    <property type="project" value="TreeGrafter"/>
</dbReference>
<dbReference type="GO" id="GO:0003735">
    <property type="term" value="F:structural constituent of ribosome"/>
    <property type="evidence" value="ECO:0007669"/>
    <property type="project" value="InterPro"/>
</dbReference>
<dbReference type="GO" id="GO:0006412">
    <property type="term" value="P:translation"/>
    <property type="evidence" value="ECO:0007669"/>
    <property type="project" value="UniProtKB-UniRule"/>
</dbReference>
<dbReference type="CDD" id="cd00387">
    <property type="entry name" value="Ribosomal_L7_L12"/>
    <property type="match status" value="1"/>
</dbReference>
<dbReference type="FunFam" id="1.20.5.710:FF:000001">
    <property type="entry name" value="50S ribosomal protein L7/L12"/>
    <property type="match status" value="1"/>
</dbReference>
<dbReference type="FunFam" id="3.30.1390.10:FF:000001">
    <property type="entry name" value="50S ribosomal protein L7/L12"/>
    <property type="match status" value="1"/>
</dbReference>
<dbReference type="Gene3D" id="3.30.1390.10">
    <property type="match status" value="1"/>
</dbReference>
<dbReference type="Gene3D" id="1.20.5.710">
    <property type="entry name" value="Single helix bin"/>
    <property type="match status" value="1"/>
</dbReference>
<dbReference type="HAMAP" id="MF_00368">
    <property type="entry name" value="Ribosomal_bL12"/>
    <property type="match status" value="1"/>
</dbReference>
<dbReference type="InterPro" id="IPR000206">
    <property type="entry name" value="Ribosomal_bL12"/>
</dbReference>
<dbReference type="InterPro" id="IPR013823">
    <property type="entry name" value="Ribosomal_bL12_C"/>
</dbReference>
<dbReference type="InterPro" id="IPR014719">
    <property type="entry name" value="Ribosomal_bL12_C/ClpS-like"/>
</dbReference>
<dbReference type="InterPro" id="IPR008932">
    <property type="entry name" value="Ribosomal_bL12_oligo"/>
</dbReference>
<dbReference type="InterPro" id="IPR036235">
    <property type="entry name" value="Ribosomal_bL12_oligo_N_sf"/>
</dbReference>
<dbReference type="NCBIfam" id="TIGR00855">
    <property type="entry name" value="L12"/>
    <property type="match status" value="1"/>
</dbReference>
<dbReference type="PANTHER" id="PTHR45987">
    <property type="entry name" value="39S RIBOSOMAL PROTEIN L12"/>
    <property type="match status" value="1"/>
</dbReference>
<dbReference type="PANTHER" id="PTHR45987:SF4">
    <property type="entry name" value="LARGE RIBOSOMAL SUBUNIT PROTEIN BL12M"/>
    <property type="match status" value="1"/>
</dbReference>
<dbReference type="Pfam" id="PF00542">
    <property type="entry name" value="Ribosomal_L12"/>
    <property type="match status" value="1"/>
</dbReference>
<dbReference type="Pfam" id="PF16320">
    <property type="entry name" value="Ribosomal_L12_N"/>
    <property type="match status" value="1"/>
</dbReference>
<dbReference type="SUPFAM" id="SSF54736">
    <property type="entry name" value="ClpS-like"/>
    <property type="match status" value="1"/>
</dbReference>
<dbReference type="SUPFAM" id="SSF48300">
    <property type="entry name" value="Ribosomal protein L7/12, oligomerisation (N-terminal) domain"/>
    <property type="match status" value="1"/>
</dbReference>
<reference key="1">
    <citation type="submission" date="2008-01" db="EMBL/GenBank/DDBJ databases">
        <title>Complete sequence of Shewanella halifaxensis HAW-EB4.</title>
        <authorList>
            <consortium name="US DOE Joint Genome Institute"/>
            <person name="Copeland A."/>
            <person name="Lucas S."/>
            <person name="Lapidus A."/>
            <person name="Glavina del Rio T."/>
            <person name="Dalin E."/>
            <person name="Tice H."/>
            <person name="Bruce D."/>
            <person name="Goodwin L."/>
            <person name="Pitluck S."/>
            <person name="Sims D."/>
            <person name="Brettin T."/>
            <person name="Detter J.C."/>
            <person name="Han C."/>
            <person name="Kuske C.R."/>
            <person name="Schmutz J."/>
            <person name="Larimer F."/>
            <person name="Land M."/>
            <person name="Hauser L."/>
            <person name="Kyrpides N."/>
            <person name="Kim E."/>
            <person name="Zhao J.-S."/>
            <person name="Richardson P."/>
        </authorList>
    </citation>
    <scope>NUCLEOTIDE SEQUENCE [LARGE SCALE GENOMIC DNA]</scope>
    <source>
        <strain>HAW-EB4</strain>
    </source>
</reference>
<sequence length="121" mass="12373">MSITKDQILEALAAMSVMEVVELIEAMEEKFGVSAAAAVVSGGGEAAAAEEKTEFDVILTSHGANKVAVIKALRGATGLGLKEAKTMAESSPIAVKEAISKEEADALKADLEAAGAEVEIK</sequence>
<evidence type="ECO:0000255" key="1">
    <source>
        <dbReference type="HAMAP-Rule" id="MF_00368"/>
    </source>
</evidence>
<evidence type="ECO:0000305" key="2"/>
<keyword id="KW-0687">Ribonucleoprotein</keyword>
<keyword id="KW-0689">Ribosomal protein</keyword>
<comment type="function">
    <text evidence="1">Forms part of the ribosomal stalk which helps the ribosome interact with GTP-bound translation factors. Is thus essential for accurate translation.</text>
</comment>
<comment type="subunit">
    <text evidence="1">Homodimer. Part of the ribosomal stalk of the 50S ribosomal subunit. Forms a multimeric L10(L12)X complex, where L10 forms an elongated spine to which 2 to 4 L12 dimers bind in a sequential fashion. Binds GTP-bound translation factors.</text>
</comment>
<comment type="similarity">
    <text evidence="1">Belongs to the bacterial ribosomal protein bL12 family.</text>
</comment>
<feature type="chain" id="PRO_1000079811" description="Large ribosomal subunit protein bL12">
    <location>
        <begin position="1"/>
        <end position="121"/>
    </location>
</feature>
<gene>
    <name evidence="1" type="primary">rplL</name>
    <name type="ordered locus">Shal_4142</name>
</gene>
<accession>B0TM20</accession>
<organism>
    <name type="scientific">Shewanella halifaxensis (strain HAW-EB4)</name>
    <dbReference type="NCBI Taxonomy" id="458817"/>
    <lineage>
        <taxon>Bacteria</taxon>
        <taxon>Pseudomonadati</taxon>
        <taxon>Pseudomonadota</taxon>
        <taxon>Gammaproteobacteria</taxon>
        <taxon>Alteromonadales</taxon>
        <taxon>Shewanellaceae</taxon>
        <taxon>Shewanella</taxon>
    </lineage>
</organism>
<protein>
    <recommendedName>
        <fullName evidence="1">Large ribosomal subunit protein bL12</fullName>
    </recommendedName>
    <alternativeName>
        <fullName evidence="2">50S ribosomal protein L7/L12</fullName>
    </alternativeName>
</protein>